<protein>
    <recommendedName>
        <fullName evidence="1">Protein GrpE</fullName>
    </recommendedName>
    <alternativeName>
        <fullName evidence="1">HSP-70 cofactor</fullName>
    </alternativeName>
</protein>
<proteinExistence type="inferred from homology"/>
<feature type="chain" id="PRO_1000053561" description="Protein GrpE">
    <location>
        <begin position="1"/>
        <end position="178"/>
    </location>
</feature>
<feature type="region of interest" description="Disordered" evidence="2">
    <location>
        <begin position="1"/>
        <end position="31"/>
    </location>
</feature>
<feature type="compositionally biased region" description="Polar residues" evidence="2">
    <location>
        <begin position="1"/>
        <end position="11"/>
    </location>
</feature>
<feature type="compositionally biased region" description="Low complexity" evidence="2">
    <location>
        <begin position="19"/>
        <end position="31"/>
    </location>
</feature>
<dbReference type="EMBL" id="CP000086">
    <property type="protein sequence ID" value="ABC37582.1"/>
    <property type="molecule type" value="Genomic_DNA"/>
</dbReference>
<dbReference type="RefSeq" id="WP_009889250.1">
    <property type="nucleotide sequence ID" value="NZ_CP008785.1"/>
</dbReference>
<dbReference type="SMR" id="Q2SYZ6"/>
<dbReference type="GeneID" id="45121050"/>
<dbReference type="KEGG" id="bte:BTH_I1306"/>
<dbReference type="HOGENOM" id="CLU_057217_6_1_4"/>
<dbReference type="Proteomes" id="UP000001930">
    <property type="component" value="Chromosome I"/>
</dbReference>
<dbReference type="GO" id="GO:0005829">
    <property type="term" value="C:cytosol"/>
    <property type="evidence" value="ECO:0007669"/>
    <property type="project" value="TreeGrafter"/>
</dbReference>
<dbReference type="GO" id="GO:0000774">
    <property type="term" value="F:adenyl-nucleotide exchange factor activity"/>
    <property type="evidence" value="ECO:0007669"/>
    <property type="project" value="InterPro"/>
</dbReference>
<dbReference type="GO" id="GO:0042803">
    <property type="term" value="F:protein homodimerization activity"/>
    <property type="evidence" value="ECO:0007669"/>
    <property type="project" value="InterPro"/>
</dbReference>
<dbReference type="GO" id="GO:0051087">
    <property type="term" value="F:protein-folding chaperone binding"/>
    <property type="evidence" value="ECO:0007669"/>
    <property type="project" value="InterPro"/>
</dbReference>
<dbReference type="GO" id="GO:0051082">
    <property type="term" value="F:unfolded protein binding"/>
    <property type="evidence" value="ECO:0007669"/>
    <property type="project" value="TreeGrafter"/>
</dbReference>
<dbReference type="GO" id="GO:0006457">
    <property type="term" value="P:protein folding"/>
    <property type="evidence" value="ECO:0007669"/>
    <property type="project" value="InterPro"/>
</dbReference>
<dbReference type="CDD" id="cd00446">
    <property type="entry name" value="GrpE"/>
    <property type="match status" value="1"/>
</dbReference>
<dbReference type="FunFam" id="2.30.22.10:FF:000001">
    <property type="entry name" value="Protein GrpE"/>
    <property type="match status" value="1"/>
</dbReference>
<dbReference type="Gene3D" id="3.90.20.20">
    <property type="match status" value="1"/>
</dbReference>
<dbReference type="Gene3D" id="2.30.22.10">
    <property type="entry name" value="Head domain of nucleotide exchange factor GrpE"/>
    <property type="match status" value="1"/>
</dbReference>
<dbReference type="HAMAP" id="MF_01151">
    <property type="entry name" value="GrpE"/>
    <property type="match status" value="1"/>
</dbReference>
<dbReference type="InterPro" id="IPR000740">
    <property type="entry name" value="GrpE"/>
</dbReference>
<dbReference type="InterPro" id="IPR013805">
    <property type="entry name" value="GrpE_coiled_coil"/>
</dbReference>
<dbReference type="InterPro" id="IPR009012">
    <property type="entry name" value="GrpE_head"/>
</dbReference>
<dbReference type="NCBIfam" id="NF010737">
    <property type="entry name" value="PRK14139.1"/>
    <property type="match status" value="1"/>
</dbReference>
<dbReference type="NCBIfam" id="NF010738">
    <property type="entry name" value="PRK14140.1"/>
    <property type="match status" value="1"/>
</dbReference>
<dbReference type="NCBIfam" id="NF010748">
    <property type="entry name" value="PRK14150.1"/>
    <property type="match status" value="1"/>
</dbReference>
<dbReference type="PANTHER" id="PTHR21237">
    <property type="entry name" value="GRPE PROTEIN"/>
    <property type="match status" value="1"/>
</dbReference>
<dbReference type="PANTHER" id="PTHR21237:SF23">
    <property type="entry name" value="GRPE PROTEIN HOMOLOG, MITOCHONDRIAL"/>
    <property type="match status" value="1"/>
</dbReference>
<dbReference type="Pfam" id="PF01025">
    <property type="entry name" value="GrpE"/>
    <property type="match status" value="1"/>
</dbReference>
<dbReference type="PRINTS" id="PR00773">
    <property type="entry name" value="GRPEPROTEIN"/>
</dbReference>
<dbReference type="SUPFAM" id="SSF58014">
    <property type="entry name" value="Coiled-coil domain of nucleotide exchange factor GrpE"/>
    <property type="match status" value="1"/>
</dbReference>
<dbReference type="SUPFAM" id="SSF51064">
    <property type="entry name" value="Head domain of nucleotide exchange factor GrpE"/>
    <property type="match status" value="1"/>
</dbReference>
<dbReference type="PROSITE" id="PS01071">
    <property type="entry name" value="GRPE"/>
    <property type="match status" value="1"/>
</dbReference>
<evidence type="ECO:0000255" key="1">
    <source>
        <dbReference type="HAMAP-Rule" id="MF_01151"/>
    </source>
</evidence>
<evidence type="ECO:0000256" key="2">
    <source>
        <dbReference type="SAM" id="MobiDB-lite"/>
    </source>
</evidence>
<accession>Q2SYZ6</accession>
<keyword id="KW-0143">Chaperone</keyword>
<keyword id="KW-0963">Cytoplasm</keyword>
<keyword id="KW-0346">Stress response</keyword>
<name>GRPE_BURTA</name>
<gene>
    <name evidence="1" type="primary">grpE</name>
    <name type="ordered locus">BTH_I1306</name>
</gene>
<reference key="1">
    <citation type="journal article" date="2005" name="BMC Genomics">
        <title>Bacterial genome adaptation to niches: divergence of the potential virulence genes in three Burkholderia species of different survival strategies.</title>
        <authorList>
            <person name="Kim H.S."/>
            <person name="Schell M.A."/>
            <person name="Yu Y."/>
            <person name="Ulrich R.L."/>
            <person name="Sarria S.H."/>
            <person name="Nierman W.C."/>
            <person name="DeShazer D."/>
        </authorList>
    </citation>
    <scope>NUCLEOTIDE SEQUENCE [LARGE SCALE GENOMIC DNA]</scope>
    <source>
        <strain>ATCC 700388 / DSM 13276 / CCUG 48851 / CIP 106301 / E264</strain>
    </source>
</reference>
<sequence>MENTQENPTDQTTEETGREAQAAENAAPAAEAALAEAQAKIAELQESFLRAKAETENVRRRAQDDVAKAHKFAIESFAENLLPVLDSLEAAVGDTSGDLAKVREGVELTLRQLTSALEKGRVAALNPVGEKFDPHLHQAISMVPADQEPNTVVAVLQKGYTIADRVLRPALVTVAQPK</sequence>
<comment type="function">
    <text evidence="1">Participates actively in the response to hyperosmotic and heat shock by preventing the aggregation of stress-denatured proteins, in association with DnaK and GrpE. It is the nucleotide exchange factor for DnaK and may function as a thermosensor. Unfolded proteins bind initially to DnaJ; upon interaction with the DnaJ-bound protein, DnaK hydrolyzes its bound ATP, resulting in the formation of a stable complex. GrpE releases ADP from DnaK; ATP binding to DnaK triggers the release of the substrate protein, thus completing the reaction cycle. Several rounds of ATP-dependent interactions between DnaJ, DnaK and GrpE are required for fully efficient folding.</text>
</comment>
<comment type="subunit">
    <text evidence="1">Homodimer.</text>
</comment>
<comment type="subcellular location">
    <subcellularLocation>
        <location evidence="1">Cytoplasm</location>
    </subcellularLocation>
</comment>
<comment type="similarity">
    <text evidence="1">Belongs to the GrpE family.</text>
</comment>
<organism>
    <name type="scientific">Burkholderia thailandensis (strain ATCC 700388 / DSM 13276 / CCUG 48851 / CIP 106301 / E264)</name>
    <dbReference type="NCBI Taxonomy" id="271848"/>
    <lineage>
        <taxon>Bacteria</taxon>
        <taxon>Pseudomonadati</taxon>
        <taxon>Pseudomonadota</taxon>
        <taxon>Betaproteobacteria</taxon>
        <taxon>Burkholderiales</taxon>
        <taxon>Burkholderiaceae</taxon>
        <taxon>Burkholderia</taxon>
        <taxon>pseudomallei group</taxon>
    </lineage>
</organism>